<dbReference type="EC" id="6.3.5.7" evidence="1"/>
<dbReference type="EMBL" id="CP000675">
    <property type="protein sequence ID" value="ABQ55142.1"/>
    <property type="molecule type" value="Genomic_DNA"/>
</dbReference>
<dbReference type="RefSeq" id="WP_011946697.1">
    <property type="nucleotide sequence ID" value="NZ_JAPMSS010000005.1"/>
</dbReference>
<dbReference type="SMR" id="A5ICP2"/>
<dbReference type="KEGG" id="lpc:LPC_1177"/>
<dbReference type="HOGENOM" id="CLU_009600_0_3_6"/>
<dbReference type="GO" id="GO:0030956">
    <property type="term" value="C:glutamyl-tRNA(Gln) amidotransferase complex"/>
    <property type="evidence" value="ECO:0007669"/>
    <property type="project" value="InterPro"/>
</dbReference>
<dbReference type="GO" id="GO:0005524">
    <property type="term" value="F:ATP binding"/>
    <property type="evidence" value="ECO:0007669"/>
    <property type="project" value="UniProtKB-KW"/>
</dbReference>
<dbReference type="GO" id="GO:0050567">
    <property type="term" value="F:glutaminyl-tRNA synthase (glutamine-hydrolyzing) activity"/>
    <property type="evidence" value="ECO:0007669"/>
    <property type="project" value="UniProtKB-UniRule"/>
</dbReference>
<dbReference type="GO" id="GO:0006412">
    <property type="term" value="P:translation"/>
    <property type="evidence" value="ECO:0007669"/>
    <property type="project" value="UniProtKB-UniRule"/>
</dbReference>
<dbReference type="Gene3D" id="3.90.1300.10">
    <property type="entry name" value="Amidase signature (AS) domain"/>
    <property type="match status" value="1"/>
</dbReference>
<dbReference type="HAMAP" id="MF_00120">
    <property type="entry name" value="GatA"/>
    <property type="match status" value="1"/>
</dbReference>
<dbReference type="InterPro" id="IPR000120">
    <property type="entry name" value="Amidase"/>
</dbReference>
<dbReference type="InterPro" id="IPR020556">
    <property type="entry name" value="Amidase_CS"/>
</dbReference>
<dbReference type="InterPro" id="IPR023631">
    <property type="entry name" value="Amidase_dom"/>
</dbReference>
<dbReference type="InterPro" id="IPR036928">
    <property type="entry name" value="AS_sf"/>
</dbReference>
<dbReference type="InterPro" id="IPR004412">
    <property type="entry name" value="GatA"/>
</dbReference>
<dbReference type="NCBIfam" id="TIGR00132">
    <property type="entry name" value="gatA"/>
    <property type="match status" value="1"/>
</dbReference>
<dbReference type="PANTHER" id="PTHR11895:SF151">
    <property type="entry name" value="GLUTAMYL-TRNA(GLN) AMIDOTRANSFERASE SUBUNIT A"/>
    <property type="match status" value="1"/>
</dbReference>
<dbReference type="PANTHER" id="PTHR11895">
    <property type="entry name" value="TRANSAMIDASE"/>
    <property type="match status" value="1"/>
</dbReference>
<dbReference type="Pfam" id="PF01425">
    <property type="entry name" value="Amidase"/>
    <property type="match status" value="1"/>
</dbReference>
<dbReference type="SUPFAM" id="SSF75304">
    <property type="entry name" value="Amidase signature (AS) enzymes"/>
    <property type="match status" value="1"/>
</dbReference>
<dbReference type="PROSITE" id="PS00571">
    <property type="entry name" value="AMIDASES"/>
    <property type="match status" value="1"/>
</dbReference>
<organism>
    <name type="scientific">Legionella pneumophila (strain Corby)</name>
    <dbReference type="NCBI Taxonomy" id="400673"/>
    <lineage>
        <taxon>Bacteria</taxon>
        <taxon>Pseudomonadati</taxon>
        <taxon>Pseudomonadota</taxon>
        <taxon>Gammaproteobacteria</taxon>
        <taxon>Legionellales</taxon>
        <taxon>Legionellaceae</taxon>
        <taxon>Legionella</taxon>
    </lineage>
</organism>
<reference key="1">
    <citation type="submission" date="2006-11" db="EMBL/GenBank/DDBJ databases">
        <title>Identification and characterization of a new conjugation/ type IVA secretion system (trb/tra) of L. pneumophila Corby localized on a mobile genomic island.</title>
        <authorList>
            <person name="Gloeckner G."/>
            <person name="Albert-Weissenberger C."/>
            <person name="Weinmann E."/>
            <person name="Jacobi S."/>
            <person name="Schunder E."/>
            <person name="Steinert M."/>
            <person name="Buchrieser C."/>
            <person name="Hacker J."/>
            <person name="Heuner K."/>
        </authorList>
    </citation>
    <scope>NUCLEOTIDE SEQUENCE [LARGE SCALE GENOMIC DNA]</scope>
    <source>
        <strain>Corby</strain>
    </source>
</reference>
<sequence length="483" mass="52617">MEHYSLAQLSKALHNREFSSVELTQHCINKIQSNKDLNAFISLDEDQALKEAQSADLVLKNGEGKPLTGIPMALKDLFCTKRLNTTCASKMLANFQAPYDATIVTKFKQNGAIIIGKTNMDEFAMGSSNENSYFGSVKNPWDRERVPGGSSGGSAAAVAGNLVPFAIGSDTGGSIRQPAAFCGISGIKPTYGLVSRYGMVAFASSLDQAGPFAKSAEDLAMILHCIAGFDSKDSTSVDRVIPDYSAEIKKPVDKIRIGLPSCFFQPQVEKGIQDAIHDAVKLFENLGAEIIEIDLKLQPLWVPCYYVIACAEASSNLSRYDGIRFGHRSKSASTLIELITNSRSEGFGNEVKRRILTGTHVLSTGFFNAYYLHAQKVRRLIRDELITTLNSVDVIIGPTTPTTAFKLGEKINDPIQNYLADVFTVAANLAGLPAISIPTGFENKLPIGLQLMGKHFSESRLLAIAHHYQQHTNWHLANPNKQG</sequence>
<evidence type="ECO:0000255" key="1">
    <source>
        <dbReference type="HAMAP-Rule" id="MF_00120"/>
    </source>
</evidence>
<feature type="chain" id="PRO_1000015852" description="Glutamyl-tRNA(Gln) amidotransferase subunit A">
    <location>
        <begin position="1"/>
        <end position="483"/>
    </location>
</feature>
<feature type="active site" description="Charge relay system" evidence="1">
    <location>
        <position position="75"/>
    </location>
</feature>
<feature type="active site" description="Charge relay system" evidence="1">
    <location>
        <position position="150"/>
    </location>
</feature>
<feature type="active site" description="Acyl-ester intermediate" evidence="1">
    <location>
        <position position="174"/>
    </location>
</feature>
<name>GATA_LEGPC</name>
<protein>
    <recommendedName>
        <fullName evidence="1">Glutamyl-tRNA(Gln) amidotransferase subunit A</fullName>
        <shortName evidence="1">Glu-ADT subunit A</shortName>
        <ecNumber evidence="1">6.3.5.7</ecNumber>
    </recommendedName>
</protein>
<proteinExistence type="inferred from homology"/>
<keyword id="KW-0067">ATP-binding</keyword>
<keyword id="KW-0436">Ligase</keyword>
<keyword id="KW-0547">Nucleotide-binding</keyword>
<keyword id="KW-0648">Protein biosynthesis</keyword>
<accession>A5ICP2</accession>
<comment type="function">
    <text evidence="1">Allows the formation of correctly charged Gln-tRNA(Gln) through the transamidation of misacylated Glu-tRNA(Gln) in organisms which lack glutaminyl-tRNA synthetase. The reaction takes place in the presence of glutamine and ATP through an activated gamma-phospho-Glu-tRNA(Gln).</text>
</comment>
<comment type="catalytic activity">
    <reaction evidence="1">
        <text>L-glutamyl-tRNA(Gln) + L-glutamine + ATP + H2O = L-glutaminyl-tRNA(Gln) + L-glutamate + ADP + phosphate + H(+)</text>
        <dbReference type="Rhea" id="RHEA:17521"/>
        <dbReference type="Rhea" id="RHEA-COMP:9681"/>
        <dbReference type="Rhea" id="RHEA-COMP:9684"/>
        <dbReference type="ChEBI" id="CHEBI:15377"/>
        <dbReference type="ChEBI" id="CHEBI:15378"/>
        <dbReference type="ChEBI" id="CHEBI:29985"/>
        <dbReference type="ChEBI" id="CHEBI:30616"/>
        <dbReference type="ChEBI" id="CHEBI:43474"/>
        <dbReference type="ChEBI" id="CHEBI:58359"/>
        <dbReference type="ChEBI" id="CHEBI:78520"/>
        <dbReference type="ChEBI" id="CHEBI:78521"/>
        <dbReference type="ChEBI" id="CHEBI:456216"/>
        <dbReference type="EC" id="6.3.5.7"/>
    </reaction>
</comment>
<comment type="subunit">
    <text evidence="1">Heterotrimer of A, B and C subunits.</text>
</comment>
<comment type="similarity">
    <text evidence="1">Belongs to the amidase family. GatA subfamily.</text>
</comment>
<gene>
    <name evidence="1" type="primary">gatA</name>
    <name type="ordered locus">LPC_1177</name>
</gene>